<proteinExistence type="inferred from homology"/>
<name>AROC_ARCFU</name>
<keyword id="KW-0028">Amino-acid biosynthesis</keyword>
<keyword id="KW-0057">Aromatic amino acid biosynthesis</keyword>
<keyword id="KW-0274">FAD</keyword>
<keyword id="KW-0285">Flavoprotein</keyword>
<keyword id="KW-0288">FMN</keyword>
<keyword id="KW-0456">Lyase</keyword>
<keyword id="KW-0521">NADP</keyword>
<keyword id="KW-1185">Reference proteome</keyword>
<comment type="function">
    <text evidence="1">Catalyzes the anti-1,4-elimination of the C-3 phosphate and the C-6 proR hydrogen from 5-enolpyruvylshikimate-3-phosphate (EPSP) to yield chorismate, which is the branch point compound that serves as the starting substrate for the three terminal pathways of aromatic amino acid biosynthesis. This reaction introduces a second double bond into the aromatic ring system.</text>
</comment>
<comment type="catalytic activity">
    <reaction evidence="1">
        <text>5-O-(1-carboxyvinyl)-3-phosphoshikimate = chorismate + phosphate</text>
        <dbReference type="Rhea" id="RHEA:21020"/>
        <dbReference type="ChEBI" id="CHEBI:29748"/>
        <dbReference type="ChEBI" id="CHEBI:43474"/>
        <dbReference type="ChEBI" id="CHEBI:57701"/>
        <dbReference type="EC" id="4.2.3.5"/>
    </reaction>
</comment>
<comment type="cofactor">
    <cofactor evidence="1">
        <name>FMNH2</name>
        <dbReference type="ChEBI" id="CHEBI:57618"/>
    </cofactor>
    <text evidence="1">Reduced FMN (FMNH(2)).</text>
</comment>
<comment type="pathway">
    <text evidence="1">Metabolic intermediate biosynthesis; chorismate biosynthesis; chorismate from D-erythrose 4-phosphate and phosphoenolpyruvate: step 7/7.</text>
</comment>
<comment type="similarity">
    <text evidence="1">Belongs to the chorismate synthase family.</text>
</comment>
<accession>O29587</accession>
<evidence type="ECO:0000255" key="1">
    <source>
        <dbReference type="HAMAP-Rule" id="MF_00300"/>
    </source>
</evidence>
<organism>
    <name type="scientific">Archaeoglobus fulgidus (strain ATCC 49558 / DSM 4304 / JCM 9628 / NBRC 100126 / VC-16)</name>
    <dbReference type="NCBI Taxonomy" id="224325"/>
    <lineage>
        <taxon>Archaea</taxon>
        <taxon>Methanobacteriati</taxon>
        <taxon>Methanobacteriota</taxon>
        <taxon>Archaeoglobi</taxon>
        <taxon>Archaeoglobales</taxon>
        <taxon>Archaeoglobaceae</taxon>
        <taxon>Archaeoglobus</taxon>
    </lineage>
</organism>
<dbReference type="EC" id="4.2.3.5" evidence="1"/>
<dbReference type="EMBL" id="AE000782">
    <property type="protein sequence ID" value="AAB90571.1"/>
    <property type="molecule type" value="Genomic_DNA"/>
</dbReference>
<dbReference type="PIR" id="F69333">
    <property type="entry name" value="F69333"/>
</dbReference>
<dbReference type="RefSeq" id="WP_010878173.1">
    <property type="nucleotide sequence ID" value="NC_000917.1"/>
</dbReference>
<dbReference type="SMR" id="O29587"/>
<dbReference type="STRING" id="224325.AF_0670"/>
<dbReference type="PaxDb" id="224325-AF_0670"/>
<dbReference type="EnsemblBacteria" id="AAB90571">
    <property type="protein sequence ID" value="AAB90571"/>
    <property type="gene ID" value="AF_0670"/>
</dbReference>
<dbReference type="GeneID" id="24794269"/>
<dbReference type="KEGG" id="afu:AF_0670"/>
<dbReference type="eggNOG" id="arCOG04133">
    <property type="taxonomic scope" value="Archaea"/>
</dbReference>
<dbReference type="HOGENOM" id="CLU_034547_0_0_2"/>
<dbReference type="OrthoDB" id="33049at2157"/>
<dbReference type="PhylomeDB" id="O29587"/>
<dbReference type="UniPathway" id="UPA00053">
    <property type="reaction ID" value="UER00090"/>
</dbReference>
<dbReference type="Proteomes" id="UP000002199">
    <property type="component" value="Chromosome"/>
</dbReference>
<dbReference type="GO" id="GO:0005829">
    <property type="term" value="C:cytosol"/>
    <property type="evidence" value="ECO:0007669"/>
    <property type="project" value="TreeGrafter"/>
</dbReference>
<dbReference type="GO" id="GO:0004107">
    <property type="term" value="F:chorismate synthase activity"/>
    <property type="evidence" value="ECO:0007669"/>
    <property type="project" value="UniProtKB-UniRule"/>
</dbReference>
<dbReference type="GO" id="GO:0010181">
    <property type="term" value="F:FMN binding"/>
    <property type="evidence" value="ECO:0007669"/>
    <property type="project" value="TreeGrafter"/>
</dbReference>
<dbReference type="GO" id="GO:0008652">
    <property type="term" value="P:amino acid biosynthetic process"/>
    <property type="evidence" value="ECO:0007669"/>
    <property type="project" value="UniProtKB-KW"/>
</dbReference>
<dbReference type="GO" id="GO:0009073">
    <property type="term" value="P:aromatic amino acid family biosynthetic process"/>
    <property type="evidence" value="ECO:0007669"/>
    <property type="project" value="UniProtKB-KW"/>
</dbReference>
<dbReference type="GO" id="GO:0009423">
    <property type="term" value="P:chorismate biosynthetic process"/>
    <property type="evidence" value="ECO:0007669"/>
    <property type="project" value="UniProtKB-UniRule"/>
</dbReference>
<dbReference type="CDD" id="cd07304">
    <property type="entry name" value="Chorismate_synthase"/>
    <property type="match status" value="1"/>
</dbReference>
<dbReference type="FunFam" id="3.60.150.10:FF:000002">
    <property type="entry name" value="Chorismate synthase"/>
    <property type="match status" value="1"/>
</dbReference>
<dbReference type="Gene3D" id="3.60.150.10">
    <property type="entry name" value="Chorismate synthase AroC"/>
    <property type="match status" value="1"/>
</dbReference>
<dbReference type="HAMAP" id="MF_00300">
    <property type="entry name" value="Chorismate_synth"/>
    <property type="match status" value="1"/>
</dbReference>
<dbReference type="InterPro" id="IPR000453">
    <property type="entry name" value="Chorismate_synth"/>
</dbReference>
<dbReference type="InterPro" id="IPR035904">
    <property type="entry name" value="Chorismate_synth_AroC_sf"/>
</dbReference>
<dbReference type="InterPro" id="IPR020541">
    <property type="entry name" value="Chorismate_synthase_CS"/>
</dbReference>
<dbReference type="NCBIfam" id="TIGR00033">
    <property type="entry name" value="aroC"/>
    <property type="match status" value="1"/>
</dbReference>
<dbReference type="NCBIfam" id="NF003793">
    <property type="entry name" value="PRK05382.1"/>
    <property type="match status" value="1"/>
</dbReference>
<dbReference type="PANTHER" id="PTHR21085">
    <property type="entry name" value="CHORISMATE SYNTHASE"/>
    <property type="match status" value="1"/>
</dbReference>
<dbReference type="PANTHER" id="PTHR21085:SF0">
    <property type="entry name" value="CHORISMATE SYNTHASE"/>
    <property type="match status" value="1"/>
</dbReference>
<dbReference type="Pfam" id="PF01264">
    <property type="entry name" value="Chorismate_synt"/>
    <property type="match status" value="1"/>
</dbReference>
<dbReference type="PIRSF" id="PIRSF001456">
    <property type="entry name" value="Chorismate_synth"/>
    <property type="match status" value="1"/>
</dbReference>
<dbReference type="SUPFAM" id="SSF103263">
    <property type="entry name" value="Chorismate synthase, AroC"/>
    <property type="match status" value="1"/>
</dbReference>
<dbReference type="PROSITE" id="PS00787">
    <property type="entry name" value="CHORISMATE_SYNTHASE_1"/>
    <property type="match status" value="1"/>
</dbReference>
<dbReference type="PROSITE" id="PS00788">
    <property type="entry name" value="CHORISMATE_SYNTHASE_2"/>
    <property type="match status" value="1"/>
</dbReference>
<dbReference type="PROSITE" id="PS00789">
    <property type="entry name" value="CHORISMATE_SYNTHASE_3"/>
    <property type="match status" value="1"/>
</dbReference>
<gene>
    <name evidence="1" type="primary">aroC</name>
    <name type="ordered locus">AF_0670</name>
</gene>
<sequence>MNTFGHFLRVTTWGESHGRAVGCVIDGFPAGLEVDEEFIQREMERRRPGKKYTTQRKEVDRVEILSGVFEGLTTATPISMVVWNVDADSSAYESLKTVFRPGHADYTYWAKFGVRDWRGGGRASARETAARVAAGAMAKLLLRRYDVKVMGYAKEIAGVSCEVDDAEKAFERAERSPLRMPDERAEKEAEQRLKEAMSEGDSVGGVVEVVAKNVPAGLGEPVFGKLDAYLAYAVMGIPAVKGVEIGAGFEAARKRGSENNDPIVLKDGRIRFATNNAGGILGGISNGEDIVLRAAIKPTPSISKKQRTVDYEKMEEAEISVKGRHDPCIVPRAVPVVEAMVALVLADCMLMQGLIPRSLL</sequence>
<protein>
    <recommendedName>
        <fullName evidence="1">Chorismate synthase</fullName>
        <shortName evidence="1">CS</shortName>
        <ecNumber evidence="1">4.2.3.5</ecNumber>
    </recommendedName>
    <alternativeName>
        <fullName evidence="1">5-enolpyruvylshikimate-3-phosphate phospholyase</fullName>
    </alternativeName>
</protein>
<feature type="chain" id="PRO_0000140687" description="Chorismate synthase">
    <location>
        <begin position="1"/>
        <end position="360"/>
    </location>
</feature>
<feature type="binding site" evidence="1">
    <location>
        <position position="46"/>
    </location>
    <ligand>
        <name>NADP(+)</name>
        <dbReference type="ChEBI" id="CHEBI:58349"/>
    </ligand>
</feature>
<feature type="binding site" evidence="1">
    <location>
        <begin position="122"/>
        <end position="124"/>
    </location>
    <ligand>
        <name>FMN</name>
        <dbReference type="ChEBI" id="CHEBI:58210"/>
    </ligand>
</feature>
<feature type="binding site" evidence="1">
    <location>
        <position position="282"/>
    </location>
    <ligand>
        <name>FMN</name>
        <dbReference type="ChEBI" id="CHEBI:58210"/>
    </ligand>
</feature>
<feature type="binding site" evidence="1">
    <location>
        <begin position="297"/>
        <end position="301"/>
    </location>
    <ligand>
        <name>FMN</name>
        <dbReference type="ChEBI" id="CHEBI:58210"/>
    </ligand>
</feature>
<feature type="binding site" evidence="1">
    <location>
        <position position="324"/>
    </location>
    <ligand>
        <name>FMN</name>
        <dbReference type="ChEBI" id="CHEBI:58210"/>
    </ligand>
</feature>
<reference key="1">
    <citation type="journal article" date="1997" name="Nature">
        <title>The complete genome sequence of the hyperthermophilic, sulphate-reducing archaeon Archaeoglobus fulgidus.</title>
        <authorList>
            <person name="Klenk H.-P."/>
            <person name="Clayton R.A."/>
            <person name="Tomb J.-F."/>
            <person name="White O."/>
            <person name="Nelson K.E."/>
            <person name="Ketchum K.A."/>
            <person name="Dodson R.J."/>
            <person name="Gwinn M.L."/>
            <person name="Hickey E.K."/>
            <person name="Peterson J.D."/>
            <person name="Richardson D.L."/>
            <person name="Kerlavage A.R."/>
            <person name="Graham D.E."/>
            <person name="Kyrpides N.C."/>
            <person name="Fleischmann R.D."/>
            <person name="Quackenbush J."/>
            <person name="Lee N.H."/>
            <person name="Sutton G.G."/>
            <person name="Gill S.R."/>
            <person name="Kirkness E.F."/>
            <person name="Dougherty B.A."/>
            <person name="McKenney K."/>
            <person name="Adams M.D."/>
            <person name="Loftus B.J."/>
            <person name="Peterson S.N."/>
            <person name="Reich C.I."/>
            <person name="McNeil L.K."/>
            <person name="Badger J.H."/>
            <person name="Glodek A."/>
            <person name="Zhou L."/>
            <person name="Overbeek R."/>
            <person name="Gocayne J.D."/>
            <person name="Weidman J.F."/>
            <person name="McDonald L.A."/>
            <person name="Utterback T.R."/>
            <person name="Cotton M.D."/>
            <person name="Spriggs T."/>
            <person name="Artiach P."/>
            <person name="Kaine B.P."/>
            <person name="Sykes S.M."/>
            <person name="Sadow P.W."/>
            <person name="D'Andrea K.P."/>
            <person name="Bowman C."/>
            <person name="Fujii C."/>
            <person name="Garland S.A."/>
            <person name="Mason T.M."/>
            <person name="Olsen G.J."/>
            <person name="Fraser C.M."/>
            <person name="Smith H.O."/>
            <person name="Woese C.R."/>
            <person name="Venter J.C."/>
        </authorList>
    </citation>
    <scope>NUCLEOTIDE SEQUENCE [LARGE SCALE GENOMIC DNA]</scope>
    <source>
        <strain>ATCC 49558 / DSM 4304 / JCM 9628 / NBRC 100126 / VC-16</strain>
    </source>
</reference>